<name>ENV_HV1KB</name>
<reference key="1">
    <citation type="journal article" date="1992" name="Virology">
        <title>Analysis of a human immunodeficiency virus type 1 isolate carrying a truncated transmembrane glycoprotein.</title>
        <authorList>
            <person name="Shimizu H."/>
            <person name="Hasebe F."/>
            <person name="Tsuchie H."/>
            <person name="Morikawa S."/>
            <person name="Ushijima H."/>
            <person name="Kitamura T."/>
        </authorList>
    </citation>
    <scope>NUCLEOTIDE SEQUENCE [GENOMIC DNA]</scope>
</reference>
<reference key="2">
    <citation type="journal article" date="2003" name="APMIS">
        <title>Pathogens target DC-SIGN to influence their fate DC-SIGN functions as a pathogen receptor with broad specificity.</title>
        <authorList>
            <person name="Geijtenbeek T.B."/>
            <person name="van Kooyk Y."/>
        </authorList>
    </citation>
    <scope>REVIEW</scope>
</reference>
<reference key="3">
    <citation type="journal article" date="2003" name="Biochim. Biophys. Acta">
        <title>The HIV Env-mediated fusion reaction.</title>
        <authorList>
            <person name="Gallo S.A."/>
            <person name="Finnegan C.M."/>
            <person name="Viard M."/>
            <person name="Raviv Y."/>
            <person name="Dimitrov A."/>
            <person name="Rawat S.S."/>
            <person name="Puri A."/>
            <person name="Durell S."/>
            <person name="Blumenthal R."/>
        </authorList>
    </citation>
    <scope>REVIEW</scope>
</reference>
<reference key="4">
    <citation type="journal article" date="2005" name="Cell Death Differ.">
        <title>Mechanisms of apoptosis induction by the HIV-1 envelope.</title>
        <authorList>
            <person name="Perfettini J.-L."/>
            <person name="Castedo M."/>
            <person name="Roumier T."/>
            <person name="Andreau K."/>
            <person name="Nardacci R."/>
            <person name="Piacentini M."/>
            <person name="Kroemer G."/>
        </authorList>
    </citation>
    <scope>REVIEW</scope>
</reference>
<reference key="5">
    <citation type="journal article" date="2005" name="AIDS Res. Hum. Retroviruses">
        <title>V3: HIV's switch-hitter.</title>
        <authorList>
            <person name="Hartley O."/>
            <person name="Klasse P.J."/>
            <person name="Sattentau Q.J."/>
            <person name="Moore J.P."/>
        </authorList>
    </citation>
    <scope>REVIEW</scope>
</reference>
<reference key="6">
    <citation type="journal article" date="2005" name="Drugs">
        <title>Emerging drug targets for antiretroviral therapy.</title>
        <authorList>
            <person name="Reeves J.D."/>
            <person name="Piefer A.J."/>
        </authorList>
    </citation>
    <scope>REVIEW</scope>
</reference>
<reference key="7">
    <citation type="journal article" date="2006" name="EMBO J.">
        <title>HIV and the chemokine system: 10 years later.</title>
        <authorList>
            <person name="Lusso P."/>
        </authorList>
    </citation>
    <scope>REVIEW</scope>
</reference>
<comment type="function">
    <molecule>Envelope glycoprotein gp160</molecule>
    <text evidence="1">Oligomerizes in the host endoplasmic reticulum into predominantly trimers. In a second time, gp160 transits in the host Golgi, where glycosylation is completed. The precursor is then proteolytically cleaved in the trans-Golgi and thereby activated by cellular furin or furin-like proteases to produce gp120 and gp41.</text>
</comment>
<comment type="function">
    <molecule>Surface protein gp120</molecule>
    <text evidence="1">Attaches the virus to the host lymphoid cell by binding to the primary receptor CD4. This interaction induces a structural rearrangement creating a high affinity binding site for a chemokine coreceptor like CXCR4 and/or CCR5. Acts as a ligand for CD209/DC-SIGN and CLEC4M/DC-SIGNR, which are respectively found on dendritic cells (DCs), and on endothelial cells of liver sinusoids and lymph node sinuses. These interactions allow capture of viral particles at mucosal surfaces by these cells and subsequent transmission to permissive cells. HIV subverts the migration properties of dendritic cells to gain access to CD4+ T-cells in lymph nodes. Virus transmission to permissive T-cells occurs either in trans (without DCs infection, through viral capture and transmission), or in cis (following DCs productive infection, through the usual CD4-gp120 interaction), thereby inducing a robust infection. In trans infection, bound virions remain infectious over days and it is proposed that they are not degraded, but protected in non-lysosomal acidic organelles within the DCs close to the cell membrane thus contributing to the viral infectious potential during DCs' migration from the periphery to the lymphoid tissues. On arrival at lymphoid tissues, intact virions recycle back to DCs' cell surface allowing virus transmission to CD4+ T-cells.</text>
</comment>
<comment type="function">
    <molecule>Transmembrane protein gp41</molecule>
    <text evidence="1">Acts as a class I viral fusion protein. Under the current model, the protein has at least 3 conformational states: pre-fusion native state, pre-hairpin intermediate state, and post-fusion hairpin state. During fusion of viral and target intracellular membranes, the coiled coil regions (heptad repeats) assume a trimer-of-hairpins structure, positioning the fusion peptide in close proximity to the C-terminal region of the ectodomain. The formation of this structure appears to drive apposition and subsequent fusion of viral and target cell membranes. Complete fusion occurs in host cell endosomes and is dynamin-dependent, however some lipid transfer might occur at the plasma membrane. The virus undergoes clathrin-dependent internalization long before endosomal fusion, thus minimizing the surface exposure of conserved viral epitopes during fusion and reducing the efficacy of inhibitors targeting these epitopes. Membranes fusion leads to delivery of the nucleocapsid into the cytoplasm.</text>
</comment>
<comment type="subunit">
    <molecule>Surface protein gp120</molecule>
    <text evidence="1">The mature envelope protein (Env) consists of a homotrimer of non-covalently associated gp120-gp41 heterodimers. The resulting complex protrudes from the virus surface as a spike. There seems to be as few as 10 spikes on the average virion. Interacts with host CD4, CCR5 and CXCR4. Gp120 also interacts with the C-type lectins CD209/DC-SIGN and CLEC4M/DC-SIGNR (collectively referred to as DC-SIGN(R)). Gp120 and gp41 interact with GalCer. Gp120 interacts with host ITGA4/ITGB7 complex; on CD4+ T-cells, this interaction results in rapid activation of integrin ITGAL/LFA-1, which facilitates efficient cell-to-cell spreading of HIV-1. Gp120 interacts with cell-associated heparan sulfate; this interaction increases virus infectivity on permissive cells and may be involved in infection of CD4- cells.</text>
</comment>
<comment type="subunit">
    <molecule>Transmembrane protein gp41</molecule>
    <text evidence="1">The mature envelope protein (Env) consists of a homotrimer of non-covalently associated gp120-gp41 heterodimers. The resulting complex protrudes from the virus surface as a spike. There seems to be as few as 10 spikes on the average virion.</text>
</comment>
<comment type="subcellular location">
    <molecule>Surface protein gp120</molecule>
    <subcellularLocation>
        <location evidence="1">Virion membrane</location>
        <topology evidence="1">Peripheral membrane protein</topology>
    </subcellularLocation>
    <subcellularLocation>
        <location evidence="1">Host cell membrane</location>
        <topology evidence="1">Peripheral membrane protein</topology>
    </subcellularLocation>
    <subcellularLocation>
        <location evidence="1">Host endosome membrane</location>
        <topology evidence="1">Single-pass type I membrane protein</topology>
    </subcellularLocation>
    <text evidence="1">The surface protein is not anchored to the viral envelope, but associates with the extravirion surface through its binding to TM. It is probably concentrated at the site of budding and incorporated into the virions possibly by contacts between the cytoplasmic tail of Env and the N-terminus of Gag.</text>
</comment>
<comment type="subcellular location">
    <molecule>Transmembrane protein gp41</molecule>
    <subcellularLocation>
        <location evidence="1">Virion membrane</location>
        <topology evidence="1">Single-pass type I membrane protein</topology>
    </subcellularLocation>
    <subcellularLocation>
        <location evidence="1">Host cell membrane</location>
        <topology evidence="1">Single-pass type I membrane protein</topology>
    </subcellularLocation>
    <subcellularLocation>
        <location evidence="1">Host endosome membrane</location>
        <topology evidence="1">Single-pass type I membrane protein</topology>
    </subcellularLocation>
    <text evidence="1">It is probably concentrated at the site of budding and incorporated into the virions possibly by contacts between the cytoplasmic tail of Env and the N-terminus of Gag.</text>
</comment>
<comment type="domain">
    <text evidence="1">Some of the most genetically diverse regions of the viral genome are present in Env. They are called variable regions 1 through 5 (V1 through V5). Coreceptor usage of gp120 is determined mainly by the primary structure of the third variable region (V3) in the outer domain of gp120. The sequence of V3 determines which coreceptor, CCR5 and/or CXCR4 (corresponding to R5/macrophage, X4/T cell and R5X4/T cell and macrophage tropism), is used to trigger the fusion potential of the Env complex, and hence which cells the virus can infect. Binding to CCR5 involves a region adjacent in addition to V3.</text>
</comment>
<comment type="domain">
    <text evidence="1">The membrane proximal external region (MPER) present in gp41 is a tryptophan-rich region recognized by the antibodies 2F5, Z13, and 4E10. MPER seems to play a role in fusion.</text>
</comment>
<comment type="domain">
    <text evidence="1">The 17 amino acids long immunosuppressive region is present in many retroviral envelope proteins. Synthetic peptides derived from this relatively conserved sequence inhibit immune function in vitro and in vivo.</text>
</comment>
<comment type="domain">
    <text evidence="1">The YXXL motif is involved in determining the exact site of viral release at the surface of infected mononuclear cells and promotes endocytosis. YXXL and di-leucine endocytosis motifs interact directly or indirectly with the clathrin adapter complexes, opperate independently, and their activities are not additive.</text>
</comment>
<comment type="domain">
    <text evidence="1">The CD4-binding region is targeted by the antibody b12.</text>
</comment>
<comment type="PTM">
    <text evidence="1">Highly glycosylated by host. The high number of glycan on the protein is reffered to as 'glycan shield' because it contributes to hide protein sequence from adaptive immune system.</text>
</comment>
<comment type="PTM">
    <text evidence="1">Palmitoylation of the transmembrane protein and of Env polyprotein (prior to its proteolytic cleavage) is essential for their association with host cell membrane lipid rafts. Palmitoylation is therefore required for envelope trafficking to classical lipid rafts, but not for viral replication.</text>
</comment>
<comment type="PTM">
    <text evidence="1">Specific enzymatic cleavages in vivo yield mature proteins. Envelope glycoproteins are synthesized as an inactive precursor that is heavily N-glycosylated and processed likely by host cell furin in the Golgi to yield the mature SU and TM proteins. The cleavage site between SU and TM requires the minimal sequence [KR]-X-[KR]-R. About 2 of the 9 disulfide bonds of gp41 are reduced by P4HB/PDI, following binding to CD4 receptor.</text>
</comment>
<comment type="miscellaneous">
    <text evidence="1">Inhibitors targeting HIV-1 viral envelope proteins are used as antiretroviral drugs. Attachment of virions to the cell surface via non-specific interactions and CD4 binding can be blocked by inhibitors that include cyanovirin-N, cyclotriazadisulfonamide analogs, PRO 2000, TNX 355 and PRO 542. In addition, BMS 806 can block CD4-induced conformational changes. Env interactions with the coreceptor molecules can be targeted by CCR5 antagonists including SCH-D, maraviroc (UK 427857) and aplaviroc (GW 873140), and the CXCR4 antagonist AMD 070. Fusion of viral and cellular membranes can be inhibited by peptides such as enfuvirtide and tifuvirtide (T 1249). Resistance to inhibitors associated with mutations in Env are observed. Most of the time, single mutations confer only a modest reduction in drug susceptibility. Combination of several mutations is usually required to develop a high-level drug resistance.</text>
</comment>
<comment type="miscellaneous">
    <text evidence="1">HIV-1 lineages are divided in three main groups, M (for Major), O (for Outlier), and N (for New, or Non-M, Non-O). The vast majority of strains found worldwide belong to the group M. Group O seems to be endemic to and largely confined to Cameroon and neighboring countries in West Central Africa, where these viruses represent a small minority of HIV-1 strains. The group N is represented by a limited number of isolates from Cameroonian persons. The group M is further subdivided in 9 clades or subtypes (A to D, F to H, J and K).</text>
</comment>
<comment type="similarity">
    <text evidence="1">Belongs to the HIV-1 env protein family.</text>
</comment>
<comment type="online information" name="hivdb">
    <link uri="https://hivdb.stanford.edu"/>
    <text>HIV drug resistance database</text>
</comment>
<comment type="online information" name="HIV drug resistance mutations">
    <link uri="https://www.iasusa.org/hiv-drug-resistance/hiv-drug-resistance-mutations/"/>
</comment>
<organismHost>
    <name type="scientific">Homo sapiens</name>
    <name type="common">Human</name>
    <dbReference type="NCBI Taxonomy" id="9606"/>
</organismHost>
<sequence length="861" mass="98116">MRVKEIRKNYQHLWRWGIMLRWGTMLLGMLMICSAAEQLWVTVYYGVPVWKEATTTLFCASDAKAYDTEAHNVWATHACVPTDPNPQEVVLVNVTENFNMWKNNMVEQMHENIISLWDQSLKPCVKLTPLCVTLHCTDLRNTTNNNSSIEEKMKGEIKNCSFNVTTNIRDKVQKEYALFYKLDVVPIDNDNNSTNTCYRLISCDTSVITQACPKVSFEPIPIHYCTPAGFALLKCNNKTFNGTGPCKNVSTVQCTHGIRPVVSTQLLLNGSLAEEGVVIRSENFTDNVKTIIVQLNETVKINCIRPNNKTRKRVTMGPGRVYYTTGEIIGDIRQAHCNISRAEWNKTLEQIANKLRKQFENKTIVFNQSSGGDPEIVMHNFNCGGEFFYCDSSQLFNSTHLSNGTWWNGTGPENITLPCRIKQIVNMWQEVGKAMYAPPIRGQIRCSSNITGLLLTRDGGNTQNNNTNSSIEIFRPGGGDMRDNWRSELYKYKVVKIEPLGVAPTRAKRRVVQREKRAVGIGAVFLGFLGAAGSTMGAAAVTLTVQARQLLPGIVQQQNNLLRAIDAQQHLLQLTVWGIKQLQARVLAVERYLKDQQLMGIWGCSGKFICTTAVPWNTSWSNKSFNEIWDNMTWMEWEREINNYTNLIYNLIEESQNQQEKNEQDLLALDKWDSLWNWFSITKWLWYIKIFIMIVGGLVGLRIVFTVLSIVNRVRQGYSPLSFQTRLPARGPDRPEGIEEEGGERDRDRSGPLVDGLLALIWVDLRSLCLFSYHRLRDLLLIVTRTVELLGRKGWEVLKYLWNLLQYWSQELKNSAVSLLNATAIAVAEGTDRVIEILQRTYRAILHIPVKIRQGLERALL</sequence>
<keyword id="KW-0014">AIDS</keyword>
<keyword id="KW-0053">Apoptosis</keyword>
<keyword id="KW-1165">Clathrin-mediated endocytosis of virus by host</keyword>
<keyword id="KW-0165">Cleavage on pair of basic residues</keyword>
<keyword id="KW-0175">Coiled coil</keyword>
<keyword id="KW-1015">Disulfide bond</keyword>
<keyword id="KW-1170">Fusion of virus membrane with host endosomal membrane</keyword>
<keyword id="KW-1168">Fusion of virus membrane with host membrane</keyword>
<keyword id="KW-0325">Glycoprotein</keyword>
<keyword id="KW-1032">Host cell membrane</keyword>
<keyword id="KW-1039">Host endosome</keyword>
<keyword id="KW-1043">Host membrane</keyword>
<keyword id="KW-0945">Host-virus interaction</keyword>
<keyword id="KW-0449">Lipoprotein</keyword>
<keyword id="KW-0472">Membrane</keyword>
<keyword id="KW-0564">Palmitate</keyword>
<keyword id="KW-0732">Signal</keyword>
<keyword id="KW-0812">Transmembrane</keyword>
<keyword id="KW-1133">Transmembrane helix</keyword>
<keyword id="KW-1161">Viral attachment to host cell</keyword>
<keyword id="KW-0261">Viral envelope protein</keyword>
<keyword id="KW-0899">Viral immunoevasion</keyword>
<keyword id="KW-1162">Viral penetration into host cytoplasm</keyword>
<keyword id="KW-0946">Virion</keyword>
<keyword id="KW-1164">Virus endocytosis by host</keyword>
<keyword id="KW-1160">Virus entry into host cell</keyword>
<feature type="signal peptide" evidence="1">
    <location>
        <begin position="1"/>
        <end position="37"/>
    </location>
</feature>
<feature type="chain" id="PRO_0000239468" description="Envelope glycoprotein gp160" evidence="1">
    <location>
        <begin position="38"/>
        <end position="861"/>
    </location>
</feature>
<feature type="chain" id="PRO_0000038375" description="Surface protein gp120" evidence="1">
    <location>
        <begin position="38"/>
        <end position="517"/>
    </location>
</feature>
<feature type="chain" id="PRO_0000038376" description="Transmembrane protein gp41" evidence="1">
    <location>
        <begin position="518"/>
        <end position="861"/>
    </location>
</feature>
<feature type="topological domain" description="Extracellular" evidence="1">
    <location>
        <begin position="38"/>
        <end position="690"/>
    </location>
</feature>
<feature type="transmembrane region" description="Helical" evidence="1">
    <location>
        <begin position="691"/>
        <end position="711"/>
    </location>
</feature>
<feature type="topological domain" description="Cytoplasmic" evidence="1">
    <location>
        <begin position="712"/>
        <end position="861"/>
    </location>
</feature>
<feature type="region of interest" description="V1" evidence="1">
    <location>
        <begin position="136"/>
        <end position="159"/>
    </location>
</feature>
<feature type="region of interest" description="V2" evidence="1">
    <location>
        <begin position="160"/>
        <end position="203"/>
    </location>
</feature>
<feature type="region of interest" description="V3" evidence="1">
    <location>
        <begin position="303"/>
        <end position="336"/>
    </location>
</feature>
<feature type="region of interest" description="CD4-binding loop" evidence="1">
    <location>
        <begin position="369"/>
        <end position="379"/>
    </location>
</feature>
<feature type="region of interest" description="V4" evidence="1">
    <location>
        <begin position="390"/>
        <end position="419"/>
    </location>
</feature>
<feature type="region of interest" description="V5">
    <location>
        <begin position="462"/>
        <end position="477"/>
    </location>
</feature>
<feature type="region of interest" description="V5" evidence="1">
    <location>
        <begin position="464"/>
        <end position="477"/>
    </location>
</feature>
<feature type="region of interest" description="Fusion peptide" evidence="1">
    <location>
        <begin position="518"/>
        <end position="538"/>
    </location>
</feature>
<feature type="region of interest" description="Immunosuppression" evidence="1">
    <location>
        <begin position="580"/>
        <end position="598"/>
    </location>
</feature>
<feature type="region of interest" description="MPER; binding to GalCer" evidence="1">
    <location>
        <begin position="668"/>
        <end position="689"/>
    </location>
</feature>
<feature type="region of interest" description="Disordered" evidence="2">
    <location>
        <begin position="725"/>
        <end position="749"/>
    </location>
</feature>
<feature type="coiled-coil region" evidence="1">
    <location>
        <begin position="639"/>
        <end position="673"/>
    </location>
</feature>
<feature type="short sequence motif" description="YXXL motif; contains endocytosis signal" evidence="1">
    <location>
        <begin position="718"/>
        <end position="721"/>
    </location>
</feature>
<feature type="short sequence motif" description="Di-leucine internalization motif" evidence="1">
    <location>
        <begin position="860"/>
        <end position="861"/>
    </location>
</feature>
<feature type="site" description="Cleavage; by host furin" evidence="1">
    <location>
        <begin position="517"/>
        <end position="518"/>
    </location>
</feature>
<feature type="lipid moiety-binding region" description="S-palmitoyl cysteine; by host" evidence="1">
    <location>
        <position position="769"/>
    </location>
</feature>
<feature type="glycosylation site" description="N-linked (GlcNAc...) asparagine; by host" evidence="1">
    <location>
        <position position="93"/>
    </location>
</feature>
<feature type="glycosylation site" description="N-linked (GlcNAc...) asparagine; by host" evidence="1">
    <location>
        <position position="141"/>
    </location>
</feature>
<feature type="glycosylation site" description="N-linked (GlcNAc...) asparagine; by host" evidence="1">
    <location>
        <position position="145"/>
    </location>
</feature>
<feature type="glycosylation site" description="N-linked (GlcNAc...) asparagine; by host" evidence="1">
    <location>
        <position position="146"/>
    </location>
</feature>
<feature type="glycosylation site" description="N-linked (GlcNAc...) asparagine; by host" evidence="1">
    <location>
        <position position="159"/>
    </location>
</feature>
<feature type="glycosylation site" description="N-linked (GlcNAc...) asparagine; by host" evidence="1">
    <location>
        <position position="163"/>
    </location>
</feature>
<feature type="glycosylation site" description="N-linked (GlcNAc...) asparagine; by host" evidence="1">
    <location>
        <position position="191"/>
    </location>
</feature>
<feature type="glycosylation site" description="N-linked (GlcNAc...) asparagine; by host" evidence="1">
    <location>
        <position position="192"/>
    </location>
</feature>
<feature type="glycosylation site" description="N-linked (GlcNAc...) asparagine; by host" evidence="1">
    <location>
        <position position="237"/>
    </location>
</feature>
<feature type="glycosylation site" description="N-linked (GlcNAc...) asparagine; by host" evidence="1">
    <location>
        <position position="241"/>
    </location>
</feature>
<feature type="glycosylation site" description="N-linked (GlcNAc...) asparagine; by host" evidence="1">
    <location>
        <position position="248"/>
    </location>
</feature>
<feature type="glycosylation site" description="N-linked (GlcNAc...) asparagine; by host" evidence="1">
    <location>
        <position position="269"/>
    </location>
</feature>
<feature type="glycosylation site" description="N-linked (GlcNAc...) asparagine; by host" evidence="1">
    <location>
        <position position="283"/>
    </location>
</feature>
<feature type="glycosylation site" description="N-linked (GlcNAc...) asparagine; by host" evidence="1">
    <location>
        <position position="296"/>
    </location>
</feature>
<feature type="glycosylation site" description="N-linked (GlcNAc...) asparagine; by host" evidence="1">
    <location>
        <position position="308"/>
    </location>
</feature>
<feature type="glycosylation site" description="N-linked (GlcNAc...) asparagine; by host" evidence="1">
    <location>
        <position position="338"/>
    </location>
</feature>
<feature type="glycosylation site" description="N-linked (GlcNAc...) asparagine; by host" evidence="1">
    <location>
        <position position="345"/>
    </location>
</feature>
<feature type="glycosylation site" description="N-linked (GlcNAc...) asparagine; by host" evidence="1">
    <location>
        <position position="361"/>
    </location>
</feature>
<feature type="glycosylation site" description="N-linked (GlcNAc...) asparagine; by host" evidence="1">
    <location>
        <position position="367"/>
    </location>
</feature>
<feature type="glycosylation site" description="N-linked (GlcNAc...) asparagine; by host" evidence="1">
    <location>
        <position position="397"/>
    </location>
</feature>
<feature type="glycosylation site" description="N-linked (GlcNAc...) asparagine; by host" evidence="1">
    <location>
        <position position="403"/>
    </location>
</feature>
<feature type="glycosylation site" description="N-linked (GlcNAc...) asparagine; by host" evidence="1">
    <location>
        <position position="408"/>
    </location>
</feature>
<feature type="glycosylation site" description="N-linked (GlcNAc...) asparagine; by host" evidence="1">
    <location>
        <position position="414"/>
    </location>
</feature>
<feature type="glycosylation site" description="N-linked (GlcNAc...) asparagine; by host" evidence="1">
    <location>
        <position position="449"/>
    </location>
</feature>
<feature type="glycosylation site" description="N-linked (GlcNAc...) asparagine; by host" evidence="1">
    <location>
        <position position="465"/>
    </location>
</feature>
<feature type="glycosylation site" description="N-linked (GlcNAc...) asparagine; by host" evidence="1">
    <location>
        <position position="468"/>
    </location>
</feature>
<feature type="glycosylation site" description="N-linked (GlcNAc...) asparagine; by host" evidence="1">
    <location>
        <position position="617"/>
    </location>
</feature>
<feature type="glycosylation site" description="N-linked (GlcNAc...) asparagine; by host" evidence="1">
    <location>
        <position position="622"/>
    </location>
</feature>
<feature type="glycosylation site" description="N-linked (GlcNAc...) asparagine; by host" evidence="1">
    <location>
        <position position="631"/>
    </location>
</feature>
<feature type="glycosylation site" description="N-linked (GlcNAc...) asparagine; by host" evidence="1">
    <location>
        <position position="643"/>
    </location>
</feature>
<feature type="disulfide bond" evidence="1">
    <location>
        <begin position="59"/>
        <end position="79"/>
    </location>
</feature>
<feature type="disulfide bond" evidence="1">
    <location>
        <begin position="124"/>
        <end position="212"/>
    </location>
</feature>
<feature type="disulfide bond" evidence="1">
    <location>
        <begin position="131"/>
        <end position="203"/>
    </location>
</feature>
<feature type="disulfide bond" evidence="1">
    <location>
        <begin position="136"/>
        <end position="160"/>
    </location>
</feature>
<feature type="disulfide bond" evidence="1">
    <location>
        <begin position="225"/>
        <end position="254"/>
    </location>
</feature>
<feature type="disulfide bond" evidence="1">
    <location>
        <begin position="235"/>
        <end position="246"/>
    </location>
</feature>
<feature type="disulfide bond" evidence="1">
    <location>
        <begin position="303"/>
        <end position="337"/>
    </location>
</feature>
<feature type="disulfide bond" evidence="1">
    <location>
        <begin position="383"/>
        <end position="446"/>
    </location>
</feature>
<feature type="disulfide bond" evidence="1">
    <location>
        <begin position="390"/>
        <end position="419"/>
    </location>
</feature>
<feature type="disulfide bond" evidence="1">
    <location>
        <begin position="604"/>
        <end position="610"/>
    </location>
</feature>
<proteinExistence type="inferred from homology"/>
<accession>P31819</accession>
<evidence type="ECO:0000255" key="1">
    <source>
        <dbReference type="HAMAP-Rule" id="MF_04083"/>
    </source>
</evidence>
<evidence type="ECO:0000256" key="2">
    <source>
        <dbReference type="SAM" id="MobiDB-lite"/>
    </source>
</evidence>
<protein>
    <recommendedName>
        <fullName evidence="1">Envelope glycoprotein gp160</fullName>
    </recommendedName>
    <alternativeName>
        <fullName evidence="1">Env polyprotein</fullName>
    </alternativeName>
    <component>
        <recommendedName>
            <fullName evidence="1">Surface protein gp120</fullName>
            <shortName evidence="1">SU</shortName>
        </recommendedName>
        <alternativeName>
            <fullName evidence="1">Glycoprotein 120</fullName>
            <shortName evidence="1">gp120</shortName>
        </alternativeName>
    </component>
    <component>
        <recommendedName>
            <fullName evidence="1">Transmembrane protein gp41</fullName>
            <shortName evidence="1">TM</shortName>
        </recommendedName>
        <alternativeName>
            <fullName evidence="1">Glycoprotein 41</fullName>
            <shortName evidence="1">gp41</shortName>
        </alternativeName>
    </component>
</protein>
<dbReference type="EMBL" id="D12582">
    <property type="protein sequence ID" value="BAA02124.1"/>
    <property type="status" value="ALT_SEQ"/>
    <property type="molecule type" value="Genomic_DNA"/>
</dbReference>
<dbReference type="PIR" id="A42995">
    <property type="entry name" value="VCLJKB"/>
</dbReference>
<dbReference type="SMR" id="P31819"/>
<dbReference type="GlyCosmos" id="P31819">
    <property type="glycosylation" value="30 sites, No reported glycans"/>
</dbReference>
<dbReference type="Reactome" id="R-HSA-5621480">
    <property type="pathway name" value="Dectin-2 family"/>
</dbReference>
<dbReference type="GO" id="GO:0044175">
    <property type="term" value="C:host cell endosome membrane"/>
    <property type="evidence" value="ECO:0007669"/>
    <property type="project" value="UniProtKB-SubCell"/>
</dbReference>
<dbReference type="GO" id="GO:0020002">
    <property type="term" value="C:host cell plasma membrane"/>
    <property type="evidence" value="ECO:0007669"/>
    <property type="project" value="UniProtKB-SubCell"/>
</dbReference>
<dbReference type="GO" id="GO:0016020">
    <property type="term" value="C:membrane"/>
    <property type="evidence" value="ECO:0007669"/>
    <property type="project" value="UniProtKB-UniRule"/>
</dbReference>
<dbReference type="GO" id="GO:0019031">
    <property type="term" value="C:viral envelope"/>
    <property type="evidence" value="ECO:0007669"/>
    <property type="project" value="UniProtKB-KW"/>
</dbReference>
<dbReference type="GO" id="GO:0055036">
    <property type="term" value="C:virion membrane"/>
    <property type="evidence" value="ECO:0007669"/>
    <property type="project" value="UniProtKB-SubCell"/>
</dbReference>
<dbReference type="GO" id="GO:0005198">
    <property type="term" value="F:structural molecule activity"/>
    <property type="evidence" value="ECO:0007669"/>
    <property type="project" value="UniProtKB-UniRule"/>
</dbReference>
<dbReference type="GO" id="GO:0075512">
    <property type="term" value="P:clathrin-dependent endocytosis of virus by host cell"/>
    <property type="evidence" value="ECO:0007669"/>
    <property type="project" value="UniProtKB-UniRule"/>
</dbReference>
<dbReference type="GO" id="GO:0039654">
    <property type="term" value="P:fusion of virus membrane with host endosome membrane"/>
    <property type="evidence" value="ECO:0007669"/>
    <property type="project" value="UniProtKB-UniRule"/>
</dbReference>
<dbReference type="GO" id="GO:0019064">
    <property type="term" value="P:fusion of virus membrane with host plasma membrane"/>
    <property type="evidence" value="ECO:0007669"/>
    <property type="project" value="UniProtKB-UniRule"/>
</dbReference>
<dbReference type="GO" id="GO:1903908">
    <property type="term" value="P:positive regulation of plasma membrane raft polarization"/>
    <property type="evidence" value="ECO:0007669"/>
    <property type="project" value="UniProtKB-UniRule"/>
</dbReference>
<dbReference type="GO" id="GO:1903911">
    <property type="term" value="P:positive regulation of receptor clustering"/>
    <property type="evidence" value="ECO:0007669"/>
    <property type="project" value="UniProtKB-UniRule"/>
</dbReference>
<dbReference type="GO" id="GO:0019082">
    <property type="term" value="P:viral protein processing"/>
    <property type="evidence" value="ECO:0007669"/>
    <property type="project" value="UniProtKB-UniRule"/>
</dbReference>
<dbReference type="GO" id="GO:0019062">
    <property type="term" value="P:virion attachment to host cell"/>
    <property type="evidence" value="ECO:0007669"/>
    <property type="project" value="UniProtKB-UniRule"/>
</dbReference>
<dbReference type="CDD" id="cd09909">
    <property type="entry name" value="HIV-1-like_HR1-HR2"/>
    <property type="match status" value="1"/>
</dbReference>
<dbReference type="FunFam" id="1.10.287.210:FF:000001">
    <property type="entry name" value="Envelope glycoprotein gp160"/>
    <property type="match status" value="1"/>
</dbReference>
<dbReference type="FunFam" id="1.20.5.490:FF:000001">
    <property type="entry name" value="Envelope glycoprotein gp160"/>
    <property type="match status" value="1"/>
</dbReference>
<dbReference type="FunFam" id="2.170.40.20:FF:000001">
    <property type="entry name" value="Envelope glycoprotein gp160"/>
    <property type="match status" value="1"/>
</dbReference>
<dbReference type="FunFam" id="2.170.40.20:FF:000003">
    <property type="entry name" value="Envelope glycoprotein gp160"/>
    <property type="match status" value="1"/>
</dbReference>
<dbReference type="Gene3D" id="1.10.287.210">
    <property type="match status" value="1"/>
</dbReference>
<dbReference type="Gene3D" id="2.170.40.20">
    <property type="entry name" value="Human immunodeficiency virus 1, Gp160, envelope glycoprotein"/>
    <property type="match status" value="2"/>
</dbReference>
<dbReference type="Gene3D" id="1.20.5.490">
    <property type="entry name" value="Single helix bin"/>
    <property type="match status" value="1"/>
</dbReference>
<dbReference type="HAMAP" id="MF_04083">
    <property type="entry name" value="HIV_ENV"/>
    <property type="match status" value="1"/>
</dbReference>
<dbReference type="InterPro" id="IPR036377">
    <property type="entry name" value="Gp120_core_sf"/>
</dbReference>
<dbReference type="InterPro" id="IPR037527">
    <property type="entry name" value="Gp160"/>
</dbReference>
<dbReference type="InterPro" id="IPR000328">
    <property type="entry name" value="GP41-like"/>
</dbReference>
<dbReference type="InterPro" id="IPR000777">
    <property type="entry name" value="HIV1_Gp120"/>
</dbReference>
<dbReference type="Pfam" id="PF00516">
    <property type="entry name" value="GP120"/>
    <property type="match status" value="1"/>
</dbReference>
<dbReference type="Pfam" id="PF00517">
    <property type="entry name" value="GP41"/>
    <property type="match status" value="1"/>
</dbReference>
<dbReference type="SUPFAM" id="SSF56502">
    <property type="entry name" value="gp120 core"/>
    <property type="match status" value="2"/>
</dbReference>
<dbReference type="SUPFAM" id="SSF58069">
    <property type="entry name" value="Virus ectodomain"/>
    <property type="match status" value="1"/>
</dbReference>
<organism>
    <name type="scientific">Human immunodeficiency virus type 1 group M subtype B (isolate KB-1/ETR)</name>
    <name type="common">HIV-1</name>
    <dbReference type="NCBI Taxonomy" id="36375"/>
    <lineage>
        <taxon>Viruses</taxon>
        <taxon>Riboviria</taxon>
        <taxon>Pararnavirae</taxon>
        <taxon>Artverviricota</taxon>
        <taxon>Revtraviricetes</taxon>
        <taxon>Ortervirales</taxon>
        <taxon>Retroviridae</taxon>
        <taxon>Orthoretrovirinae</taxon>
        <taxon>Lentivirus</taxon>
        <taxon>Human immunodeficiency virus type 1</taxon>
    </lineage>
</organism>
<gene>
    <name evidence="1" type="primary">env</name>
</gene>